<comment type="function">
    <text evidence="1">Together with the chaperonin GroEL, plays an essential role in assisting protein folding. The GroEL-GroES system forms a nano-cage that allows encapsulation of the non-native substrate proteins and provides a physical environment optimized to promote and accelerate protein folding. GroES binds to the apical surface of the GroEL ring, thereby capping the opening of the GroEL channel.</text>
</comment>
<comment type="subunit">
    <text evidence="1">Heptamer of 7 subunits arranged in a ring. Interacts with the chaperonin GroEL.</text>
</comment>
<comment type="subcellular location">
    <subcellularLocation>
        <location evidence="1">Cytoplasm</location>
    </subcellularLocation>
</comment>
<comment type="similarity">
    <text evidence="1">Belongs to the GroES chaperonin family.</text>
</comment>
<sequence length="101" mass="10628">MATAKKINLRPLDDRVVVQPSEAEETTAGGIVLPDSAKEKPQRGTVVAVGPGKLLDSGNRGELSVSVGDVVIYGKYGGSEIEVDGHEMKILRESDILAKIG</sequence>
<accession>Q7UM98</accession>
<protein>
    <recommendedName>
        <fullName evidence="1">Co-chaperonin GroES 1</fullName>
    </recommendedName>
    <alternativeName>
        <fullName evidence="1">10 kDa chaperonin 1</fullName>
    </alternativeName>
    <alternativeName>
        <fullName evidence="1">Chaperonin-10 1</fullName>
        <shortName evidence="1">Cpn10 1</shortName>
    </alternativeName>
</protein>
<keyword id="KW-0143">Chaperone</keyword>
<keyword id="KW-0963">Cytoplasm</keyword>
<keyword id="KW-1185">Reference proteome</keyword>
<feature type="chain" id="PRO_0000174821" description="Co-chaperonin GroES 1">
    <location>
        <begin position="1"/>
        <end position="101"/>
    </location>
</feature>
<gene>
    <name evidence="1" type="primary">groES1</name>
    <name evidence="1" type="synonym">groS1</name>
    <name type="ordered locus">RB8969</name>
</gene>
<name>CH101_RHOBA</name>
<reference key="1">
    <citation type="journal article" date="2003" name="Proc. Natl. Acad. Sci. U.S.A.">
        <title>Complete genome sequence of the marine planctomycete Pirellula sp. strain 1.</title>
        <authorList>
            <person name="Gloeckner F.O."/>
            <person name="Kube M."/>
            <person name="Bauer M."/>
            <person name="Teeling H."/>
            <person name="Lombardot T."/>
            <person name="Ludwig W."/>
            <person name="Gade D."/>
            <person name="Beck A."/>
            <person name="Borzym K."/>
            <person name="Heitmann K."/>
            <person name="Rabus R."/>
            <person name="Schlesner H."/>
            <person name="Amann R."/>
            <person name="Reinhardt R."/>
        </authorList>
    </citation>
    <scope>NUCLEOTIDE SEQUENCE [LARGE SCALE GENOMIC DNA]</scope>
    <source>
        <strain>DSM 10527 / NCIMB 13988 / SH1</strain>
    </source>
</reference>
<proteinExistence type="inferred from homology"/>
<evidence type="ECO:0000255" key="1">
    <source>
        <dbReference type="HAMAP-Rule" id="MF_00580"/>
    </source>
</evidence>
<organism>
    <name type="scientific">Rhodopirellula baltica (strain DSM 10527 / NCIMB 13988 / SH1)</name>
    <dbReference type="NCBI Taxonomy" id="243090"/>
    <lineage>
        <taxon>Bacteria</taxon>
        <taxon>Pseudomonadati</taxon>
        <taxon>Planctomycetota</taxon>
        <taxon>Planctomycetia</taxon>
        <taxon>Pirellulales</taxon>
        <taxon>Pirellulaceae</taxon>
        <taxon>Rhodopirellula</taxon>
    </lineage>
</organism>
<dbReference type="EMBL" id="BX294148">
    <property type="protein sequence ID" value="CAD76019.1"/>
    <property type="molecule type" value="Genomic_DNA"/>
</dbReference>
<dbReference type="RefSeq" id="NP_868642.1">
    <property type="nucleotide sequence ID" value="NC_005027.1"/>
</dbReference>
<dbReference type="SMR" id="Q7UM98"/>
<dbReference type="FunCoup" id="Q7UM98">
    <property type="interactions" value="497"/>
</dbReference>
<dbReference type="STRING" id="243090.RB8969"/>
<dbReference type="EnsemblBacteria" id="CAD76019">
    <property type="protein sequence ID" value="CAD76019"/>
    <property type="gene ID" value="RB8969"/>
</dbReference>
<dbReference type="KEGG" id="rba:RB8969"/>
<dbReference type="PATRIC" id="fig|243090.15.peg.4302"/>
<dbReference type="eggNOG" id="COG0234">
    <property type="taxonomic scope" value="Bacteria"/>
</dbReference>
<dbReference type="HOGENOM" id="CLU_132825_2_0_0"/>
<dbReference type="InParanoid" id="Q7UM98"/>
<dbReference type="OrthoDB" id="9806791at2"/>
<dbReference type="Proteomes" id="UP000001025">
    <property type="component" value="Chromosome"/>
</dbReference>
<dbReference type="GO" id="GO:0005737">
    <property type="term" value="C:cytoplasm"/>
    <property type="evidence" value="ECO:0007669"/>
    <property type="project" value="UniProtKB-SubCell"/>
</dbReference>
<dbReference type="GO" id="GO:0005524">
    <property type="term" value="F:ATP binding"/>
    <property type="evidence" value="ECO:0007669"/>
    <property type="project" value="InterPro"/>
</dbReference>
<dbReference type="GO" id="GO:0046872">
    <property type="term" value="F:metal ion binding"/>
    <property type="evidence" value="ECO:0000318"/>
    <property type="project" value="GO_Central"/>
</dbReference>
<dbReference type="GO" id="GO:0044183">
    <property type="term" value="F:protein folding chaperone"/>
    <property type="evidence" value="ECO:0007669"/>
    <property type="project" value="InterPro"/>
</dbReference>
<dbReference type="GO" id="GO:0051087">
    <property type="term" value="F:protein-folding chaperone binding"/>
    <property type="evidence" value="ECO:0000318"/>
    <property type="project" value="GO_Central"/>
</dbReference>
<dbReference type="GO" id="GO:0051082">
    <property type="term" value="F:unfolded protein binding"/>
    <property type="evidence" value="ECO:0000318"/>
    <property type="project" value="GO_Central"/>
</dbReference>
<dbReference type="GO" id="GO:0051085">
    <property type="term" value="P:chaperone cofactor-dependent protein refolding"/>
    <property type="evidence" value="ECO:0000318"/>
    <property type="project" value="GO_Central"/>
</dbReference>
<dbReference type="CDD" id="cd00320">
    <property type="entry name" value="cpn10"/>
    <property type="match status" value="1"/>
</dbReference>
<dbReference type="FunFam" id="2.30.33.40:FF:000001">
    <property type="entry name" value="10 kDa chaperonin"/>
    <property type="match status" value="1"/>
</dbReference>
<dbReference type="Gene3D" id="2.30.33.40">
    <property type="entry name" value="GroES chaperonin"/>
    <property type="match status" value="1"/>
</dbReference>
<dbReference type="HAMAP" id="MF_00580">
    <property type="entry name" value="CH10"/>
    <property type="match status" value="1"/>
</dbReference>
<dbReference type="InterPro" id="IPR020818">
    <property type="entry name" value="Chaperonin_GroES"/>
</dbReference>
<dbReference type="InterPro" id="IPR037124">
    <property type="entry name" value="Chaperonin_GroES_sf"/>
</dbReference>
<dbReference type="InterPro" id="IPR018369">
    <property type="entry name" value="Chaprnonin_Cpn10_CS"/>
</dbReference>
<dbReference type="InterPro" id="IPR011032">
    <property type="entry name" value="GroES-like_sf"/>
</dbReference>
<dbReference type="NCBIfam" id="NF001527">
    <property type="entry name" value="PRK00364.1-2"/>
    <property type="match status" value="1"/>
</dbReference>
<dbReference type="NCBIfam" id="NF001531">
    <property type="entry name" value="PRK00364.2-2"/>
    <property type="match status" value="1"/>
</dbReference>
<dbReference type="NCBIfam" id="NF001533">
    <property type="entry name" value="PRK00364.2-4"/>
    <property type="match status" value="1"/>
</dbReference>
<dbReference type="NCBIfam" id="NF001534">
    <property type="entry name" value="PRK00364.2-5"/>
    <property type="match status" value="1"/>
</dbReference>
<dbReference type="PANTHER" id="PTHR10772">
    <property type="entry name" value="10 KDA HEAT SHOCK PROTEIN"/>
    <property type="match status" value="1"/>
</dbReference>
<dbReference type="PANTHER" id="PTHR10772:SF58">
    <property type="entry name" value="CO-CHAPERONIN GROES"/>
    <property type="match status" value="1"/>
</dbReference>
<dbReference type="Pfam" id="PF00166">
    <property type="entry name" value="Cpn10"/>
    <property type="match status" value="1"/>
</dbReference>
<dbReference type="PRINTS" id="PR00297">
    <property type="entry name" value="CHAPERONIN10"/>
</dbReference>
<dbReference type="SMART" id="SM00883">
    <property type="entry name" value="Cpn10"/>
    <property type="match status" value="1"/>
</dbReference>
<dbReference type="SUPFAM" id="SSF50129">
    <property type="entry name" value="GroES-like"/>
    <property type="match status" value="1"/>
</dbReference>
<dbReference type="PROSITE" id="PS00681">
    <property type="entry name" value="CHAPERONINS_CPN10"/>
    <property type="match status" value="1"/>
</dbReference>